<gene>
    <name evidence="1" type="primary">coaA</name>
    <name type="ordered locus">PPA1799</name>
</gene>
<evidence type="ECO:0000255" key="1">
    <source>
        <dbReference type="HAMAP-Rule" id="MF_00215"/>
    </source>
</evidence>
<accession>Q6A6T7</accession>
<proteinExistence type="inferred from homology"/>
<comment type="catalytic activity">
    <reaction evidence="1">
        <text>(R)-pantothenate + ATP = (R)-4'-phosphopantothenate + ADP + H(+)</text>
        <dbReference type="Rhea" id="RHEA:16373"/>
        <dbReference type="ChEBI" id="CHEBI:10986"/>
        <dbReference type="ChEBI" id="CHEBI:15378"/>
        <dbReference type="ChEBI" id="CHEBI:29032"/>
        <dbReference type="ChEBI" id="CHEBI:30616"/>
        <dbReference type="ChEBI" id="CHEBI:456216"/>
        <dbReference type="EC" id="2.7.1.33"/>
    </reaction>
</comment>
<comment type="pathway">
    <text evidence="1">Cofactor biosynthesis; coenzyme A biosynthesis; CoA from (R)-pantothenate: step 1/5.</text>
</comment>
<comment type="subcellular location">
    <subcellularLocation>
        <location evidence="1">Cytoplasm</location>
    </subcellularLocation>
</comment>
<comment type="similarity">
    <text evidence="1">Belongs to the prokaryotic pantothenate kinase family.</text>
</comment>
<organism>
    <name type="scientific">Cutibacterium acnes (strain DSM 16379 / KPA171202)</name>
    <name type="common">Propionibacterium acnes</name>
    <dbReference type="NCBI Taxonomy" id="267747"/>
    <lineage>
        <taxon>Bacteria</taxon>
        <taxon>Bacillati</taxon>
        <taxon>Actinomycetota</taxon>
        <taxon>Actinomycetes</taxon>
        <taxon>Propionibacteriales</taxon>
        <taxon>Propionibacteriaceae</taxon>
        <taxon>Cutibacterium</taxon>
    </lineage>
</organism>
<feature type="chain" id="PRO_0000325560" description="Pantothenate kinase">
    <location>
        <begin position="1"/>
        <end position="327"/>
    </location>
</feature>
<feature type="binding site" evidence="1">
    <location>
        <begin position="105"/>
        <end position="112"/>
    </location>
    <ligand>
        <name>ATP</name>
        <dbReference type="ChEBI" id="CHEBI:30616"/>
    </ligand>
</feature>
<sequence length="327" mass="37004">MNLTPTTPVDDDNTEPGPFIELSRESWAVLSDSTEIDIDEATLDHIRGLGDPTSHRDVVEVYRPLTQLIHLYCMHTGALFDASNNFLQLTRHGMKRTPFVIGIAGSVAVGKSTVARLLRELLGRSPRRPVVDLVTTDGFLYPNRVLEERELLSRKGFPESYDRKALLRFVVDVKSGMPEVTAPVYSHVTYDIVPNQQLVVRQPDILIIEGLNVLQPPRRRSSGTMGLALSDFFDFSVYVDAEEADIIRWYINRFLTLRQTAFTDPHSFFGEYARMPDNEAITIAKEIWDTINGPNLVQNVLPTRGRATAILHKGPDHEVRNVWIRKV</sequence>
<name>COAA_CUTAK</name>
<reference key="1">
    <citation type="journal article" date="2004" name="Science">
        <title>The complete genome sequence of Propionibacterium acnes, a commensal of human skin.</title>
        <authorList>
            <person name="Brueggemann H."/>
            <person name="Henne A."/>
            <person name="Hoster F."/>
            <person name="Liesegang H."/>
            <person name="Wiezer A."/>
            <person name="Strittmatter A."/>
            <person name="Hujer S."/>
            <person name="Duerre P."/>
            <person name="Gottschalk G."/>
        </authorList>
    </citation>
    <scope>NUCLEOTIDE SEQUENCE [LARGE SCALE GENOMIC DNA]</scope>
    <source>
        <strain>DSM 16379 / KPA171202</strain>
    </source>
</reference>
<dbReference type="EC" id="2.7.1.33" evidence="1"/>
<dbReference type="EMBL" id="AE017283">
    <property type="protein sequence ID" value="AAT83526.1"/>
    <property type="molecule type" value="Genomic_DNA"/>
</dbReference>
<dbReference type="RefSeq" id="WP_002522082.1">
    <property type="nucleotide sequence ID" value="NZ_CP025935.1"/>
</dbReference>
<dbReference type="SMR" id="Q6A6T7"/>
<dbReference type="EnsemblBacteria" id="AAT83526">
    <property type="protein sequence ID" value="AAT83526"/>
    <property type="gene ID" value="PPA1799"/>
</dbReference>
<dbReference type="KEGG" id="pac:PPA1799"/>
<dbReference type="eggNOG" id="COG1072">
    <property type="taxonomic scope" value="Bacteria"/>
</dbReference>
<dbReference type="HOGENOM" id="CLU_053818_1_1_11"/>
<dbReference type="UniPathway" id="UPA00241">
    <property type="reaction ID" value="UER00352"/>
</dbReference>
<dbReference type="Proteomes" id="UP000000603">
    <property type="component" value="Chromosome"/>
</dbReference>
<dbReference type="GO" id="GO:0005737">
    <property type="term" value="C:cytoplasm"/>
    <property type="evidence" value="ECO:0007669"/>
    <property type="project" value="UniProtKB-SubCell"/>
</dbReference>
<dbReference type="GO" id="GO:0005524">
    <property type="term" value="F:ATP binding"/>
    <property type="evidence" value="ECO:0007669"/>
    <property type="project" value="UniProtKB-UniRule"/>
</dbReference>
<dbReference type="GO" id="GO:0004594">
    <property type="term" value="F:pantothenate kinase activity"/>
    <property type="evidence" value="ECO:0007669"/>
    <property type="project" value="UniProtKB-UniRule"/>
</dbReference>
<dbReference type="GO" id="GO:0015937">
    <property type="term" value="P:coenzyme A biosynthetic process"/>
    <property type="evidence" value="ECO:0007669"/>
    <property type="project" value="UniProtKB-UniRule"/>
</dbReference>
<dbReference type="CDD" id="cd02025">
    <property type="entry name" value="PanK"/>
    <property type="match status" value="1"/>
</dbReference>
<dbReference type="Gene3D" id="3.40.50.300">
    <property type="entry name" value="P-loop containing nucleotide triphosphate hydrolases"/>
    <property type="match status" value="1"/>
</dbReference>
<dbReference type="HAMAP" id="MF_00215">
    <property type="entry name" value="Pantothen_kinase_1"/>
    <property type="match status" value="1"/>
</dbReference>
<dbReference type="InterPro" id="IPR027417">
    <property type="entry name" value="P-loop_NTPase"/>
</dbReference>
<dbReference type="InterPro" id="IPR004566">
    <property type="entry name" value="PanK"/>
</dbReference>
<dbReference type="InterPro" id="IPR006083">
    <property type="entry name" value="PRK/URK"/>
</dbReference>
<dbReference type="NCBIfam" id="TIGR00554">
    <property type="entry name" value="panK_bact"/>
    <property type="match status" value="1"/>
</dbReference>
<dbReference type="PANTHER" id="PTHR10285">
    <property type="entry name" value="URIDINE KINASE"/>
    <property type="match status" value="1"/>
</dbReference>
<dbReference type="Pfam" id="PF00485">
    <property type="entry name" value="PRK"/>
    <property type="match status" value="1"/>
</dbReference>
<dbReference type="PIRSF" id="PIRSF000545">
    <property type="entry name" value="Pantothenate_kin"/>
    <property type="match status" value="1"/>
</dbReference>
<dbReference type="SUPFAM" id="SSF52540">
    <property type="entry name" value="P-loop containing nucleoside triphosphate hydrolases"/>
    <property type="match status" value="1"/>
</dbReference>
<keyword id="KW-0067">ATP-binding</keyword>
<keyword id="KW-0173">Coenzyme A biosynthesis</keyword>
<keyword id="KW-0963">Cytoplasm</keyword>
<keyword id="KW-0418">Kinase</keyword>
<keyword id="KW-0547">Nucleotide-binding</keyword>
<keyword id="KW-0808">Transferase</keyword>
<protein>
    <recommendedName>
        <fullName evidence="1">Pantothenate kinase</fullName>
        <ecNumber evidence="1">2.7.1.33</ecNumber>
    </recommendedName>
    <alternativeName>
        <fullName evidence="1">Pantothenic acid kinase</fullName>
    </alternativeName>
</protein>